<dbReference type="EMBL" id="BX640423">
    <property type="protein sequence ID" value="CAE39773.1"/>
    <property type="molecule type" value="Genomic_DNA"/>
</dbReference>
<dbReference type="RefSeq" id="WP_003806907.1">
    <property type="nucleotide sequence ID" value="NC_002928.3"/>
</dbReference>
<dbReference type="SMR" id="Q7W2F3"/>
<dbReference type="GeneID" id="93206261"/>
<dbReference type="KEGG" id="bpa:BPP0032"/>
<dbReference type="HOGENOM" id="CLU_036235_2_1_4"/>
<dbReference type="Proteomes" id="UP000001421">
    <property type="component" value="Chromosome"/>
</dbReference>
<dbReference type="GO" id="GO:0015934">
    <property type="term" value="C:large ribosomal subunit"/>
    <property type="evidence" value="ECO:0007669"/>
    <property type="project" value="InterPro"/>
</dbReference>
<dbReference type="GO" id="GO:0019843">
    <property type="term" value="F:rRNA binding"/>
    <property type="evidence" value="ECO:0007669"/>
    <property type="project" value="UniProtKB-UniRule"/>
</dbReference>
<dbReference type="GO" id="GO:0003735">
    <property type="term" value="F:structural constituent of ribosome"/>
    <property type="evidence" value="ECO:0007669"/>
    <property type="project" value="InterPro"/>
</dbReference>
<dbReference type="GO" id="GO:0016740">
    <property type="term" value="F:transferase activity"/>
    <property type="evidence" value="ECO:0007669"/>
    <property type="project" value="InterPro"/>
</dbReference>
<dbReference type="GO" id="GO:0002181">
    <property type="term" value="P:cytoplasmic translation"/>
    <property type="evidence" value="ECO:0007669"/>
    <property type="project" value="TreeGrafter"/>
</dbReference>
<dbReference type="FunFam" id="2.30.30.30:FF:000001">
    <property type="entry name" value="50S ribosomal protein L2"/>
    <property type="match status" value="1"/>
</dbReference>
<dbReference type="FunFam" id="2.40.50.140:FF:000003">
    <property type="entry name" value="50S ribosomal protein L2"/>
    <property type="match status" value="1"/>
</dbReference>
<dbReference type="FunFam" id="4.10.950.10:FF:000001">
    <property type="entry name" value="50S ribosomal protein L2"/>
    <property type="match status" value="1"/>
</dbReference>
<dbReference type="Gene3D" id="2.30.30.30">
    <property type="match status" value="1"/>
</dbReference>
<dbReference type="Gene3D" id="2.40.50.140">
    <property type="entry name" value="Nucleic acid-binding proteins"/>
    <property type="match status" value="1"/>
</dbReference>
<dbReference type="Gene3D" id="4.10.950.10">
    <property type="entry name" value="Ribosomal protein L2, domain 3"/>
    <property type="match status" value="1"/>
</dbReference>
<dbReference type="HAMAP" id="MF_01320_B">
    <property type="entry name" value="Ribosomal_uL2_B"/>
    <property type="match status" value="1"/>
</dbReference>
<dbReference type="InterPro" id="IPR012340">
    <property type="entry name" value="NA-bd_OB-fold"/>
</dbReference>
<dbReference type="InterPro" id="IPR014722">
    <property type="entry name" value="Rib_uL2_dom2"/>
</dbReference>
<dbReference type="InterPro" id="IPR002171">
    <property type="entry name" value="Ribosomal_uL2"/>
</dbReference>
<dbReference type="InterPro" id="IPR005880">
    <property type="entry name" value="Ribosomal_uL2_bac/org-type"/>
</dbReference>
<dbReference type="InterPro" id="IPR022669">
    <property type="entry name" value="Ribosomal_uL2_C"/>
</dbReference>
<dbReference type="InterPro" id="IPR022671">
    <property type="entry name" value="Ribosomal_uL2_CS"/>
</dbReference>
<dbReference type="InterPro" id="IPR014726">
    <property type="entry name" value="Ribosomal_uL2_dom3"/>
</dbReference>
<dbReference type="InterPro" id="IPR022666">
    <property type="entry name" value="Ribosomal_uL2_RNA-bd_dom"/>
</dbReference>
<dbReference type="InterPro" id="IPR008991">
    <property type="entry name" value="Translation_prot_SH3-like_sf"/>
</dbReference>
<dbReference type="NCBIfam" id="TIGR01171">
    <property type="entry name" value="rplB_bact"/>
    <property type="match status" value="1"/>
</dbReference>
<dbReference type="PANTHER" id="PTHR13691:SF5">
    <property type="entry name" value="LARGE RIBOSOMAL SUBUNIT PROTEIN UL2M"/>
    <property type="match status" value="1"/>
</dbReference>
<dbReference type="PANTHER" id="PTHR13691">
    <property type="entry name" value="RIBOSOMAL PROTEIN L2"/>
    <property type="match status" value="1"/>
</dbReference>
<dbReference type="Pfam" id="PF00181">
    <property type="entry name" value="Ribosomal_L2"/>
    <property type="match status" value="1"/>
</dbReference>
<dbReference type="Pfam" id="PF03947">
    <property type="entry name" value="Ribosomal_L2_C"/>
    <property type="match status" value="1"/>
</dbReference>
<dbReference type="PIRSF" id="PIRSF002158">
    <property type="entry name" value="Ribosomal_L2"/>
    <property type="match status" value="1"/>
</dbReference>
<dbReference type="SMART" id="SM01383">
    <property type="entry name" value="Ribosomal_L2"/>
    <property type="match status" value="1"/>
</dbReference>
<dbReference type="SMART" id="SM01382">
    <property type="entry name" value="Ribosomal_L2_C"/>
    <property type="match status" value="1"/>
</dbReference>
<dbReference type="SUPFAM" id="SSF50249">
    <property type="entry name" value="Nucleic acid-binding proteins"/>
    <property type="match status" value="1"/>
</dbReference>
<dbReference type="SUPFAM" id="SSF50104">
    <property type="entry name" value="Translation proteins SH3-like domain"/>
    <property type="match status" value="1"/>
</dbReference>
<dbReference type="PROSITE" id="PS00467">
    <property type="entry name" value="RIBOSOMAL_L2"/>
    <property type="match status" value="1"/>
</dbReference>
<keyword id="KW-0687">Ribonucleoprotein</keyword>
<keyword id="KW-0689">Ribosomal protein</keyword>
<keyword id="KW-0694">RNA-binding</keyword>
<keyword id="KW-0699">rRNA-binding</keyword>
<reference key="1">
    <citation type="journal article" date="2003" name="Nat. Genet.">
        <title>Comparative analysis of the genome sequences of Bordetella pertussis, Bordetella parapertussis and Bordetella bronchiseptica.</title>
        <authorList>
            <person name="Parkhill J."/>
            <person name="Sebaihia M."/>
            <person name="Preston A."/>
            <person name="Murphy L.D."/>
            <person name="Thomson N.R."/>
            <person name="Harris D.E."/>
            <person name="Holden M.T.G."/>
            <person name="Churcher C.M."/>
            <person name="Bentley S.D."/>
            <person name="Mungall K.L."/>
            <person name="Cerdeno-Tarraga A.-M."/>
            <person name="Temple L."/>
            <person name="James K.D."/>
            <person name="Harris B."/>
            <person name="Quail M.A."/>
            <person name="Achtman M."/>
            <person name="Atkin R."/>
            <person name="Baker S."/>
            <person name="Basham D."/>
            <person name="Bason N."/>
            <person name="Cherevach I."/>
            <person name="Chillingworth T."/>
            <person name="Collins M."/>
            <person name="Cronin A."/>
            <person name="Davis P."/>
            <person name="Doggett J."/>
            <person name="Feltwell T."/>
            <person name="Goble A."/>
            <person name="Hamlin N."/>
            <person name="Hauser H."/>
            <person name="Holroyd S."/>
            <person name="Jagels K."/>
            <person name="Leather S."/>
            <person name="Moule S."/>
            <person name="Norberczak H."/>
            <person name="O'Neil S."/>
            <person name="Ormond D."/>
            <person name="Price C."/>
            <person name="Rabbinowitsch E."/>
            <person name="Rutter S."/>
            <person name="Sanders M."/>
            <person name="Saunders D."/>
            <person name="Seeger K."/>
            <person name="Sharp S."/>
            <person name="Simmonds M."/>
            <person name="Skelton J."/>
            <person name="Squares R."/>
            <person name="Squares S."/>
            <person name="Stevens K."/>
            <person name="Unwin L."/>
            <person name="Whitehead S."/>
            <person name="Barrell B.G."/>
            <person name="Maskell D.J."/>
        </authorList>
    </citation>
    <scope>NUCLEOTIDE SEQUENCE [LARGE SCALE GENOMIC DNA]</scope>
    <source>
        <strain>12822 / ATCC BAA-587 / NCTC 13253</strain>
    </source>
</reference>
<organism>
    <name type="scientific">Bordetella parapertussis (strain 12822 / ATCC BAA-587 / NCTC 13253)</name>
    <dbReference type="NCBI Taxonomy" id="257311"/>
    <lineage>
        <taxon>Bacteria</taxon>
        <taxon>Pseudomonadati</taxon>
        <taxon>Pseudomonadota</taxon>
        <taxon>Betaproteobacteria</taxon>
        <taxon>Burkholderiales</taxon>
        <taxon>Alcaligenaceae</taxon>
        <taxon>Bordetella</taxon>
    </lineage>
</organism>
<name>RL2_BORPA</name>
<evidence type="ECO:0000255" key="1">
    <source>
        <dbReference type="HAMAP-Rule" id="MF_01320"/>
    </source>
</evidence>
<evidence type="ECO:0000256" key="2">
    <source>
        <dbReference type="SAM" id="MobiDB-lite"/>
    </source>
</evidence>
<evidence type="ECO:0000305" key="3"/>
<proteinExistence type="inferred from homology"/>
<accession>Q7W2F3</accession>
<protein>
    <recommendedName>
        <fullName evidence="1">Large ribosomal subunit protein uL2</fullName>
    </recommendedName>
    <alternativeName>
        <fullName evidence="3">50S ribosomal protein L2</fullName>
    </alternativeName>
</protein>
<comment type="function">
    <text evidence="1">One of the primary rRNA binding proteins. Required for association of the 30S and 50S subunits to form the 70S ribosome, for tRNA binding and peptide bond formation. It has been suggested to have peptidyltransferase activity; this is somewhat controversial. Makes several contacts with the 16S rRNA in the 70S ribosome.</text>
</comment>
<comment type="subunit">
    <text evidence="1">Part of the 50S ribosomal subunit. Forms a bridge to the 30S subunit in the 70S ribosome.</text>
</comment>
<comment type="similarity">
    <text evidence="1">Belongs to the universal ribosomal protein uL2 family.</text>
</comment>
<sequence>MALVKVKPTSAGRRGMVKVVSPKLHKGAPHAALLEKKTRGSGRNNNGHITVRHRGGGHKQHYRVVDFRRNKDGIPAKVERLEYDPNRTAHIALLCYADGERRYIIAPRGLEVGATLISGIEAPIRAGNTLPIRNIPVGTTIHCIEMIPGKGAQMARSAGASAVLMAREGTYAQVRLRSGEVRRVHIQCRATIGEVGNEEHSLRQIGKAGAMRWRGVRPTVRGVAMNPIDHPHGGGEGRTGEAREPVSPWGTPAKGFKTRRNKRTNNMIVQRRKRK</sequence>
<gene>
    <name evidence="1" type="primary">rplB</name>
    <name type="ordered locus">BPP0032</name>
</gene>
<feature type="chain" id="PRO_0000129534" description="Large ribosomal subunit protein uL2">
    <location>
        <begin position="1"/>
        <end position="275"/>
    </location>
</feature>
<feature type="region of interest" description="Disordered" evidence="2">
    <location>
        <begin position="38"/>
        <end position="59"/>
    </location>
</feature>
<feature type="region of interest" description="Disordered" evidence="2">
    <location>
        <begin position="223"/>
        <end position="275"/>
    </location>
</feature>
<feature type="compositionally biased region" description="Basic residues" evidence="2">
    <location>
        <begin position="50"/>
        <end position="59"/>
    </location>
</feature>
<feature type="compositionally biased region" description="Basic and acidic residues" evidence="2">
    <location>
        <begin position="229"/>
        <end position="244"/>
    </location>
</feature>